<dbReference type="EC" id="3.5.1.5" evidence="1"/>
<dbReference type="EMBL" id="CP001620">
    <property type="protein sequence ID" value="ACR17564.1"/>
    <property type="molecule type" value="Genomic_DNA"/>
</dbReference>
<dbReference type="RefSeq" id="WP_012731451.1">
    <property type="nucleotide sequence ID" value="NC_012704.1"/>
</dbReference>
<dbReference type="SMR" id="C4LIA9"/>
<dbReference type="STRING" id="645127.ckrop_0808"/>
<dbReference type="KEGG" id="ckp:ckrop_0808"/>
<dbReference type="eggNOG" id="COG0831">
    <property type="taxonomic scope" value="Bacteria"/>
</dbReference>
<dbReference type="HOGENOM" id="CLU_145825_1_0_11"/>
<dbReference type="OrthoDB" id="9797217at2"/>
<dbReference type="UniPathway" id="UPA00258">
    <property type="reaction ID" value="UER00370"/>
</dbReference>
<dbReference type="Proteomes" id="UP000001473">
    <property type="component" value="Chromosome"/>
</dbReference>
<dbReference type="GO" id="GO:0005737">
    <property type="term" value="C:cytoplasm"/>
    <property type="evidence" value="ECO:0007669"/>
    <property type="project" value="UniProtKB-SubCell"/>
</dbReference>
<dbReference type="GO" id="GO:0016151">
    <property type="term" value="F:nickel cation binding"/>
    <property type="evidence" value="ECO:0007669"/>
    <property type="project" value="InterPro"/>
</dbReference>
<dbReference type="GO" id="GO:0009039">
    <property type="term" value="F:urease activity"/>
    <property type="evidence" value="ECO:0007669"/>
    <property type="project" value="UniProtKB-UniRule"/>
</dbReference>
<dbReference type="GO" id="GO:0043419">
    <property type="term" value="P:urea catabolic process"/>
    <property type="evidence" value="ECO:0007669"/>
    <property type="project" value="UniProtKB-UniRule"/>
</dbReference>
<dbReference type="CDD" id="cd00390">
    <property type="entry name" value="Urease_gamma"/>
    <property type="match status" value="1"/>
</dbReference>
<dbReference type="Gene3D" id="3.30.280.10">
    <property type="entry name" value="Urease, gamma-like subunit"/>
    <property type="match status" value="1"/>
</dbReference>
<dbReference type="HAMAP" id="MF_00739">
    <property type="entry name" value="Urease_gamma"/>
    <property type="match status" value="1"/>
</dbReference>
<dbReference type="InterPro" id="IPR012010">
    <property type="entry name" value="Urease_gamma"/>
</dbReference>
<dbReference type="InterPro" id="IPR002026">
    <property type="entry name" value="Urease_gamma/gamma-beta_su"/>
</dbReference>
<dbReference type="InterPro" id="IPR036463">
    <property type="entry name" value="Urease_gamma_sf"/>
</dbReference>
<dbReference type="InterPro" id="IPR050069">
    <property type="entry name" value="Urease_subunit"/>
</dbReference>
<dbReference type="NCBIfam" id="NF009712">
    <property type="entry name" value="PRK13241.1"/>
    <property type="match status" value="1"/>
</dbReference>
<dbReference type="NCBIfam" id="TIGR00193">
    <property type="entry name" value="urease_gam"/>
    <property type="match status" value="1"/>
</dbReference>
<dbReference type="PANTHER" id="PTHR33569">
    <property type="entry name" value="UREASE"/>
    <property type="match status" value="1"/>
</dbReference>
<dbReference type="PANTHER" id="PTHR33569:SF1">
    <property type="entry name" value="UREASE"/>
    <property type="match status" value="1"/>
</dbReference>
<dbReference type="Pfam" id="PF00547">
    <property type="entry name" value="Urease_gamma"/>
    <property type="match status" value="1"/>
</dbReference>
<dbReference type="PIRSF" id="PIRSF001223">
    <property type="entry name" value="Urease_gamma"/>
    <property type="match status" value="1"/>
</dbReference>
<dbReference type="SUPFAM" id="SSF54111">
    <property type="entry name" value="Urease, gamma-subunit"/>
    <property type="match status" value="1"/>
</dbReference>
<proteinExistence type="inferred from homology"/>
<reference key="1">
    <citation type="journal article" date="2008" name="J. Biotechnol.">
        <title>Ultrafast pyrosequencing of Corynebacterium kroppenstedtii DSM44385 revealed insights into the physiology of a lipophilic corynebacterium that lacks mycolic acids.</title>
        <authorList>
            <person name="Tauch A."/>
            <person name="Schneider J."/>
            <person name="Szczepanowski R."/>
            <person name="Tilker A."/>
            <person name="Viehoever P."/>
            <person name="Gartemann K.-H."/>
            <person name="Arnold W."/>
            <person name="Blom J."/>
            <person name="Brinkrolf K."/>
            <person name="Brune I."/>
            <person name="Goetker S."/>
            <person name="Weisshaar B."/>
            <person name="Goesmann A."/>
            <person name="Droege M."/>
            <person name="Puehler A."/>
        </authorList>
    </citation>
    <scope>NUCLEOTIDE SEQUENCE [LARGE SCALE GENOMIC DNA]</scope>
    <source>
        <strain>DSM 44385 / JCM 11950 / CIP 105744 / CCUG 35717</strain>
    </source>
</reference>
<sequence>MNLSPRETDKLLVFLAAQVAQRRRERGVKLNHPEAIALISDAVIEAARDGKSVAEAMHIGTTVLTADEVLDEVPDMVSLVQVEATFPDGTKLVSVHDPIRH</sequence>
<gene>
    <name evidence="1" type="primary">ureA</name>
    <name type="ordered locus">ckrop_0808</name>
</gene>
<accession>C4LIA9</accession>
<keyword id="KW-0963">Cytoplasm</keyword>
<keyword id="KW-0378">Hydrolase</keyword>
<keyword id="KW-1185">Reference proteome</keyword>
<organism>
    <name type="scientific">Corynebacterium kroppenstedtii (strain DSM 44385 / JCM 11950 / CIP 105744 / CCUG 35717)</name>
    <dbReference type="NCBI Taxonomy" id="645127"/>
    <lineage>
        <taxon>Bacteria</taxon>
        <taxon>Bacillati</taxon>
        <taxon>Actinomycetota</taxon>
        <taxon>Actinomycetes</taxon>
        <taxon>Mycobacteriales</taxon>
        <taxon>Corynebacteriaceae</taxon>
        <taxon>Corynebacterium</taxon>
    </lineage>
</organism>
<name>URE3_CORK4</name>
<comment type="catalytic activity">
    <reaction evidence="1">
        <text>urea + 2 H2O + H(+) = hydrogencarbonate + 2 NH4(+)</text>
        <dbReference type="Rhea" id="RHEA:20557"/>
        <dbReference type="ChEBI" id="CHEBI:15377"/>
        <dbReference type="ChEBI" id="CHEBI:15378"/>
        <dbReference type="ChEBI" id="CHEBI:16199"/>
        <dbReference type="ChEBI" id="CHEBI:17544"/>
        <dbReference type="ChEBI" id="CHEBI:28938"/>
        <dbReference type="EC" id="3.5.1.5"/>
    </reaction>
</comment>
<comment type="pathway">
    <text evidence="1">Nitrogen metabolism; urea degradation; CO(2) and NH(3) from urea (urease route): step 1/1.</text>
</comment>
<comment type="subunit">
    <text evidence="1">Heterotrimer of UreA (gamma), UreB (beta) and UreC (alpha) subunits. Three heterotrimers associate to form the active enzyme.</text>
</comment>
<comment type="subcellular location">
    <subcellularLocation>
        <location evidence="1">Cytoplasm</location>
    </subcellularLocation>
</comment>
<comment type="similarity">
    <text evidence="1">Belongs to the urease gamma subunit family.</text>
</comment>
<evidence type="ECO:0000255" key="1">
    <source>
        <dbReference type="HAMAP-Rule" id="MF_00739"/>
    </source>
</evidence>
<feature type="chain" id="PRO_1000212800" description="Urease subunit gamma">
    <location>
        <begin position="1"/>
        <end position="101"/>
    </location>
</feature>
<protein>
    <recommendedName>
        <fullName evidence="1">Urease subunit gamma</fullName>
        <ecNumber evidence="1">3.5.1.5</ecNumber>
    </recommendedName>
    <alternativeName>
        <fullName evidence="1">Urea amidohydrolase subunit gamma</fullName>
    </alternativeName>
</protein>